<name>CTCN2_ECHES</name>
<keyword id="KW-0027">Amidation</keyword>
<keyword id="KW-0044">Antibiotic</keyword>
<keyword id="KW-0929">Antimicrobial</keyword>
<keyword id="KW-0102">Bromination</keyword>
<keyword id="KW-0204">Cytolysis</keyword>
<keyword id="KW-0903">Direct protein sequencing</keyword>
<keyword id="KW-1015">Disulfide bond</keyword>
<keyword id="KW-0295">Fungicide</keyword>
<keyword id="KW-0354">Hemolysis</keyword>
<keyword id="KW-0873">Pyrrolidone carboxylic acid</keyword>
<keyword id="KW-0732">Signal</keyword>
<reference evidence="5" key="1">
    <citation type="journal article" date="2016" name="PLoS ONE">
        <title>Novel Antimicrobial Peptides EeCentrocins 1, 2 and EeStrongylocin 2 from the Edible Sea Urchin Echinus esculentus Have 6-Br-Trp Post-Translational Modifications.</title>
        <authorList>
            <person name="Solstad R.G."/>
            <person name="Li C."/>
            <person name="Isaksson J."/>
            <person name="Johansen J."/>
            <person name="Svenson J."/>
            <person name="Stensvag K."/>
            <person name="Haug T."/>
        </authorList>
    </citation>
    <scope>NUCLEOTIDE SEQUENCE [MRNA]</scope>
    <scope>PROTEIN SEQUENCE OF 51-82 AND 105-117</scope>
    <scope>FUNCTION</scope>
    <scope>MASS SPECTROMETRY</scope>
    <scope>BROMINATION AT TRP-51 AND TRP-59</scope>
    <scope>AMIDATION AT HIS-119</scope>
    <scope>PYROGLUTAMATE FORMATION AT GLN-107</scope>
    <source>
        <tissue evidence="3">Coelomocyte</tissue>
    </source>
</reference>
<protein>
    <recommendedName>
        <fullName evidence="5">Centrocin 2</fullName>
    </recommendedName>
    <alternativeName>
        <fullName evidence="3">EeCentrocin 2</fullName>
    </alternativeName>
    <component>
        <recommendedName>
            <fullName evidence="3">Centrocin 2, heavy chain</fullName>
        </recommendedName>
    </component>
    <component>
        <recommendedName>
            <fullName evidence="3">Centrocin 2, light chain</fullName>
        </recommendedName>
    </component>
</protein>
<proteinExistence type="evidence at protein level"/>
<sequence length="121" mass="13151">MMIKIAVVLCAVMATSMVFANDVKEQELADLLDLLISEEVSSPDDAVAESWGHKLRSSWNKVKHAVKKGAGYASGACRVLGHSPQEARAKVLEAFPEMKESDLDEEQVGKYCAVAHAIHGR</sequence>
<feature type="signal peptide" evidence="1">
    <location>
        <begin position="1"/>
        <end position="20"/>
    </location>
</feature>
<feature type="propeptide" id="PRO_0000438842" evidence="4">
    <location>
        <begin position="21"/>
        <end position="50"/>
    </location>
</feature>
<feature type="peptide" id="PRO_0000438843" description="Centrocin 2, heavy chain" evidence="2">
    <location>
        <begin position="51"/>
        <end position="82"/>
    </location>
</feature>
<feature type="propeptide" id="PRO_0000438844" evidence="4">
    <location>
        <begin position="83"/>
        <end position="106"/>
    </location>
</feature>
<feature type="peptide" id="PRO_0000438845" description="Centrocin 2, light chain" evidence="2">
    <location>
        <begin position="107"/>
        <end position="119"/>
    </location>
</feature>
<feature type="modified residue" description="6'-bromotryptophan" evidence="2">
    <location>
        <position position="51"/>
    </location>
</feature>
<feature type="modified residue" description="6'-bromotryptophan" evidence="2">
    <location>
        <position position="59"/>
    </location>
</feature>
<feature type="modified residue" description="Pyrrolidone carboxylic acid" evidence="2">
    <location>
        <position position="107"/>
    </location>
</feature>
<feature type="modified residue" description="Histidine amide" evidence="2">
    <location>
        <position position="119"/>
    </location>
</feature>
<feature type="disulfide bond" evidence="3">
    <location>
        <begin position="77"/>
        <end position="112"/>
    </location>
</feature>
<comment type="function">
    <molecule>Centrocin 2, heavy chain</molecule>
    <text evidence="2">Has antimicrobial activity against Gram-negative bacteria, Gram-positive bacteria and against fungi with minimum inhibitory concentration (MIC) between 0.78 uM and 50 uM. Shows little hemolytic activity at concentrations up to 12.5 uM but &gt;50% lysis at 100 uM.</text>
</comment>
<comment type="subunit">
    <text evidence="2">Heterodimer of a light and a heavy chain, probably disulfide-linked.</text>
</comment>
<comment type="mass spectrometry" mass="5019.37" method="Electrospray" evidence="2">
    <text>The measured ranges are 51-82, 107-119.</text>
</comment>
<organism evidence="5">
    <name type="scientific">Echinus esculentus</name>
    <name type="common">Sea urchin</name>
    <dbReference type="NCBI Taxonomy" id="7648"/>
    <lineage>
        <taxon>Eukaryota</taxon>
        <taxon>Metazoa</taxon>
        <taxon>Echinodermata</taxon>
        <taxon>Eleutherozoa</taxon>
        <taxon>Echinozoa</taxon>
        <taxon>Echinoidea</taxon>
        <taxon>Euechinoidea</taxon>
        <taxon>Echinacea</taxon>
        <taxon>Camarodonta</taxon>
        <taxon>Echinidea</taxon>
        <taxon>Echinidae</taxon>
        <taxon>Echinus</taxon>
    </lineage>
</organism>
<evidence type="ECO:0000255" key="1"/>
<evidence type="ECO:0000269" key="2">
    <source>
    </source>
</evidence>
<evidence type="ECO:0000303" key="3">
    <source>
    </source>
</evidence>
<evidence type="ECO:0000305" key="4">
    <source>
    </source>
</evidence>
<evidence type="ECO:0000312" key="5">
    <source>
        <dbReference type="EMBL" id="AMT92375.1"/>
    </source>
</evidence>
<accession>A0A144LVL3</accession>
<dbReference type="EMBL" id="KR494263">
    <property type="protein sequence ID" value="AMT92375.1"/>
    <property type="molecule type" value="mRNA"/>
</dbReference>
<dbReference type="GO" id="GO:0042742">
    <property type="term" value="P:defense response to bacterium"/>
    <property type="evidence" value="ECO:0007669"/>
    <property type="project" value="UniProtKB-KW"/>
</dbReference>
<dbReference type="GO" id="GO:0050832">
    <property type="term" value="P:defense response to fungus"/>
    <property type="evidence" value="ECO:0007669"/>
    <property type="project" value="UniProtKB-KW"/>
</dbReference>
<dbReference type="GO" id="GO:0031640">
    <property type="term" value="P:killing of cells of another organism"/>
    <property type="evidence" value="ECO:0007669"/>
    <property type="project" value="UniProtKB-KW"/>
</dbReference>